<feature type="chain" id="PRO_1000065637" description="Bifunctional protein Aas">
    <location>
        <begin position="1"/>
        <end position="719"/>
    </location>
</feature>
<feature type="transmembrane region" description="Helical" evidence="1">
    <location>
        <begin position="258"/>
        <end position="277"/>
    </location>
</feature>
<feature type="transmembrane region" description="Helical" evidence="1">
    <location>
        <begin position="409"/>
        <end position="433"/>
    </location>
</feature>
<feature type="region of interest" description="Acyltransferase">
    <location>
        <begin position="15"/>
        <end position="138"/>
    </location>
</feature>
<feature type="region of interest" description="AMP-binding">
    <location>
        <begin position="233"/>
        <end position="646"/>
    </location>
</feature>
<feature type="active site" evidence="1">
    <location>
        <position position="36"/>
    </location>
</feature>
<organism>
    <name type="scientific">Escherichia coli O6:K15:H31 (strain 536 / UPEC)</name>
    <dbReference type="NCBI Taxonomy" id="362663"/>
    <lineage>
        <taxon>Bacteria</taxon>
        <taxon>Pseudomonadati</taxon>
        <taxon>Pseudomonadota</taxon>
        <taxon>Gammaproteobacteria</taxon>
        <taxon>Enterobacterales</taxon>
        <taxon>Enterobacteriaceae</taxon>
        <taxon>Escherichia</taxon>
    </lineage>
</organism>
<keyword id="KW-0012">Acyltransferase</keyword>
<keyword id="KW-0067">ATP-binding</keyword>
<keyword id="KW-0997">Cell inner membrane</keyword>
<keyword id="KW-1003">Cell membrane</keyword>
<keyword id="KW-0436">Ligase</keyword>
<keyword id="KW-0472">Membrane</keyword>
<keyword id="KW-0511">Multifunctional enzyme</keyword>
<keyword id="KW-0547">Nucleotide-binding</keyword>
<keyword id="KW-0808">Transferase</keyword>
<keyword id="KW-0812">Transmembrane</keyword>
<keyword id="KW-1133">Transmembrane helix</keyword>
<proteinExistence type="inferred from homology"/>
<protein>
    <recommendedName>
        <fullName evidence="1">Bifunctional protein Aas</fullName>
    </recommendedName>
    <domain>
        <recommendedName>
            <fullName evidence="1">2-acylglycerophosphoethanolamine acyltransferase</fullName>
            <ecNumber evidence="1">2.3.1.40</ecNumber>
        </recommendedName>
        <alternativeName>
            <fullName evidence="1">2-acyl-GPE acyltransferase</fullName>
        </alternativeName>
        <alternativeName>
            <fullName evidence="1">Acyl-[acyl-carrier-protein]--phospholipid O-acyltransferase</fullName>
        </alternativeName>
    </domain>
    <domain>
        <recommendedName>
            <fullName evidence="1">Acyl-[acyl-carrier-protein] synthetase</fullName>
            <ecNumber evidence="1">6.2.1.20</ecNumber>
        </recommendedName>
        <alternativeName>
            <fullName evidence="1">Acyl-ACP synthetase</fullName>
        </alternativeName>
        <alternativeName>
            <fullName evidence="1">Long-chain-fatty-acid--[acyl-carrier-protein] ligase</fullName>
        </alternativeName>
    </domain>
</protein>
<gene>
    <name evidence="1" type="primary">aas</name>
    <name type="ordered locus">ECP_2849</name>
</gene>
<accession>Q0TDZ6</accession>
<name>AAS_ECOL5</name>
<comment type="function">
    <text evidence="1">Plays a role in lysophospholipid acylation. Transfers fatty acids to the 1-position via an enzyme-bound acyl-ACP intermediate in the presence of ATP and magnesium. Its physiological function is to regenerate phosphatidylethanolamine from 2-acyl-glycero-3-phosphoethanolamine (2-acyl-GPE) formed by transacylation reactions or degradation by phospholipase A1.</text>
</comment>
<comment type="catalytic activity">
    <reaction evidence="1">
        <text>a 2-acyl-sn-glycero-3-phosphoethanolamine + a fatty acyl-[ACP] = a 1,2-diacyl-sn-glycero-3-phosphoethanolamine + holo-[ACP]</text>
        <dbReference type="Rhea" id="RHEA:10304"/>
        <dbReference type="Rhea" id="RHEA-COMP:9685"/>
        <dbReference type="Rhea" id="RHEA-COMP:14125"/>
        <dbReference type="ChEBI" id="CHEBI:64479"/>
        <dbReference type="ChEBI" id="CHEBI:64612"/>
        <dbReference type="ChEBI" id="CHEBI:65213"/>
        <dbReference type="ChEBI" id="CHEBI:138651"/>
        <dbReference type="EC" id="2.3.1.40"/>
    </reaction>
</comment>
<comment type="catalytic activity">
    <reaction evidence="1">
        <text>a long-chain fatty acid + holo-[ACP] + ATP = a long-chain fatty acyl-[ACP] + AMP + diphosphate</text>
        <dbReference type="Rhea" id="RHEA:45588"/>
        <dbReference type="Rhea" id="RHEA-COMP:9685"/>
        <dbReference type="Rhea" id="RHEA-COMP:12682"/>
        <dbReference type="ChEBI" id="CHEBI:30616"/>
        <dbReference type="ChEBI" id="CHEBI:33019"/>
        <dbReference type="ChEBI" id="CHEBI:57560"/>
        <dbReference type="ChEBI" id="CHEBI:64479"/>
        <dbReference type="ChEBI" id="CHEBI:133243"/>
        <dbReference type="ChEBI" id="CHEBI:456215"/>
        <dbReference type="EC" id="6.2.1.20"/>
    </reaction>
</comment>
<comment type="subcellular location">
    <subcellularLocation>
        <location evidence="1">Cell inner membrane</location>
        <topology evidence="1">Multi-pass membrane protein</topology>
    </subcellularLocation>
</comment>
<comment type="similarity">
    <text evidence="1">In the N-terminal section; belongs to the 2-acyl-GPE acetyltransferase family.</text>
</comment>
<comment type="similarity">
    <text evidence="1">In the C-terminal section; belongs to the ATP-dependent AMP-binding enzyme family.</text>
</comment>
<sequence length="719" mass="80842">MLFSFFRNLCRVLYRVRVTGDTKALKGERVLITPNHVSFIDGILLALFLPVRPVFAVYTSISQQWYMRWLKSFIDFVPLDPTQPMAIKHLVRLVEQGRPVVIFPEGRITTTGSLMKIYDGAGFVAAKSGATVIPVRIEGAELTHFSRLKGLVKRRLFPQITLHILPPTQVEMPDAPRARDRRKIAGEMLHQIMMEARMAVRPRETLYESLLSAMYRFGAGKKCVEDVNFTPDSYRKLLTKTLFVGRILEKYSVEGERIGLMLPNAGISAAVIFGAIARRRIPAMMNYTAGVKGLTSAITAAEIKTIFTSRQFLDKGKLWHLPEQLTQVRWVYLEDLKADVTTADKVWIFAHLLMPRLAQVKQQPEEEALILFTSGSEGHPKGVVHSHKSILANVEQIKTIADFTTNDRFMSALPLFHSFGLTVGLFTPLLTGAEVFLYPSPLHYRIVPELVYDRSCTVLFGTSTFLGHYARFANPYDFYRLRYVVAGAEKLQESTKQLWQDKFGLRILEGYGVTECAPVVSINVPMAAKPGTVGRILPGMDARLLSVPGIEEGGRLQLKGPNIMNGYLRVEKPGVLEVPTAENVRGEMERDWYDTGDIVRFDEQGFVQIQGRAKRFAKIAGEMVSLEMVEQLALGVSPDKVHATAIKSDASKGEALVLFTTDNELMRDKLQQYAREHGVPELAVPRDIRYLKQMPLLGSGKPDFVTLKSWVDEAEQHDE</sequence>
<reference key="1">
    <citation type="journal article" date="2006" name="Mol. Microbiol.">
        <title>Role of pathogenicity island-associated integrases in the genome plasticity of uropathogenic Escherichia coli strain 536.</title>
        <authorList>
            <person name="Hochhut B."/>
            <person name="Wilde C."/>
            <person name="Balling G."/>
            <person name="Middendorf B."/>
            <person name="Dobrindt U."/>
            <person name="Brzuszkiewicz E."/>
            <person name="Gottschalk G."/>
            <person name="Carniel E."/>
            <person name="Hacker J."/>
        </authorList>
    </citation>
    <scope>NUCLEOTIDE SEQUENCE [LARGE SCALE GENOMIC DNA]</scope>
    <source>
        <strain>536 / UPEC</strain>
    </source>
</reference>
<evidence type="ECO:0000255" key="1">
    <source>
        <dbReference type="HAMAP-Rule" id="MF_01162"/>
    </source>
</evidence>
<dbReference type="EC" id="2.3.1.40" evidence="1"/>
<dbReference type="EC" id="6.2.1.20" evidence="1"/>
<dbReference type="EMBL" id="CP000247">
    <property type="protein sequence ID" value="ABG70833.1"/>
    <property type="molecule type" value="Genomic_DNA"/>
</dbReference>
<dbReference type="RefSeq" id="WP_000899025.1">
    <property type="nucleotide sequence ID" value="NC_008253.1"/>
</dbReference>
<dbReference type="SMR" id="Q0TDZ6"/>
<dbReference type="KEGG" id="ecp:ECP_2849"/>
<dbReference type="HOGENOM" id="CLU_000022_59_8_6"/>
<dbReference type="Proteomes" id="UP000009182">
    <property type="component" value="Chromosome"/>
</dbReference>
<dbReference type="GO" id="GO:0005886">
    <property type="term" value="C:plasma membrane"/>
    <property type="evidence" value="ECO:0007669"/>
    <property type="project" value="UniProtKB-SubCell"/>
</dbReference>
<dbReference type="GO" id="GO:0008779">
    <property type="term" value="F:acyl-[acyl-carrier-protein]-phospholipid O-acyltransferase activity"/>
    <property type="evidence" value="ECO:0007669"/>
    <property type="project" value="UniProtKB-UniRule"/>
</dbReference>
<dbReference type="GO" id="GO:0005524">
    <property type="term" value="F:ATP binding"/>
    <property type="evidence" value="ECO:0007669"/>
    <property type="project" value="UniProtKB-KW"/>
</dbReference>
<dbReference type="GO" id="GO:0008922">
    <property type="term" value="F:long-chain fatty acid [acyl-carrier-protein] ligase activity"/>
    <property type="evidence" value="ECO:0007669"/>
    <property type="project" value="UniProtKB-UniRule"/>
</dbReference>
<dbReference type="GO" id="GO:0031956">
    <property type="term" value="F:medium-chain fatty acid-CoA ligase activity"/>
    <property type="evidence" value="ECO:0007669"/>
    <property type="project" value="TreeGrafter"/>
</dbReference>
<dbReference type="GO" id="GO:0006631">
    <property type="term" value="P:fatty acid metabolic process"/>
    <property type="evidence" value="ECO:0007669"/>
    <property type="project" value="InterPro"/>
</dbReference>
<dbReference type="GO" id="GO:0008654">
    <property type="term" value="P:phospholipid biosynthetic process"/>
    <property type="evidence" value="ECO:0007669"/>
    <property type="project" value="InterPro"/>
</dbReference>
<dbReference type="CDD" id="cd05909">
    <property type="entry name" value="AAS_C"/>
    <property type="match status" value="1"/>
</dbReference>
<dbReference type="CDD" id="cd07989">
    <property type="entry name" value="LPLAT_AGPAT-like"/>
    <property type="match status" value="1"/>
</dbReference>
<dbReference type="FunFam" id="3.30.300.30:FF:000009">
    <property type="entry name" value="Bifunctional protein Aas"/>
    <property type="match status" value="1"/>
</dbReference>
<dbReference type="FunFam" id="3.40.50.12780:FF:000009">
    <property type="entry name" value="Bifunctional protein Aas"/>
    <property type="match status" value="1"/>
</dbReference>
<dbReference type="Gene3D" id="3.30.300.30">
    <property type="match status" value="1"/>
</dbReference>
<dbReference type="Gene3D" id="3.40.50.12780">
    <property type="entry name" value="N-terminal domain of ligase-like"/>
    <property type="match status" value="1"/>
</dbReference>
<dbReference type="HAMAP" id="MF_01162">
    <property type="entry name" value="Aas"/>
    <property type="match status" value="1"/>
</dbReference>
<dbReference type="InterPro" id="IPR023775">
    <property type="entry name" value="Aas"/>
</dbReference>
<dbReference type="InterPro" id="IPR045851">
    <property type="entry name" value="AMP-bd_C_sf"/>
</dbReference>
<dbReference type="InterPro" id="IPR020845">
    <property type="entry name" value="AMP-binding_CS"/>
</dbReference>
<dbReference type="InterPro" id="IPR000873">
    <property type="entry name" value="AMP-dep_synth/lig_dom"/>
</dbReference>
<dbReference type="InterPro" id="IPR042099">
    <property type="entry name" value="ANL_N_sf"/>
</dbReference>
<dbReference type="InterPro" id="IPR002123">
    <property type="entry name" value="Plipid/glycerol_acylTrfase"/>
</dbReference>
<dbReference type="NCBIfam" id="NF005959">
    <property type="entry name" value="PRK08043.1"/>
    <property type="match status" value="1"/>
</dbReference>
<dbReference type="PANTHER" id="PTHR43201">
    <property type="entry name" value="ACYL-COA SYNTHETASE"/>
    <property type="match status" value="1"/>
</dbReference>
<dbReference type="PANTHER" id="PTHR43201:SF8">
    <property type="entry name" value="ACYL-COA SYNTHETASE FAMILY MEMBER 3"/>
    <property type="match status" value="1"/>
</dbReference>
<dbReference type="Pfam" id="PF01553">
    <property type="entry name" value="Acyltransferase"/>
    <property type="match status" value="1"/>
</dbReference>
<dbReference type="Pfam" id="PF00501">
    <property type="entry name" value="AMP-binding"/>
    <property type="match status" value="1"/>
</dbReference>
<dbReference type="SMART" id="SM00563">
    <property type="entry name" value="PlsC"/>
    <property type="match status" value="1"/>
</dbReference>
<dbReference type="SUPFAM" id="SSF56801">
    <property type="entry name" value="Acetyl-CoA synthetase-like"/>
    <property type="match status" value="1"/>
</dbReference>
<dbReference type="SUPFAM" id="SSF69593">
    <property type="entry name" value="Glycerol-3-phosphate (1)-acyltransferase"/>
    <property type="match status" value="1"/>
</dbReference>
<dbReference type="PROSITE" id="PS00455">
    <property type="entry name" value="AMP_BINDING"/>
    <property type="match status" value="1"/>
</dbReference>